<gene>
    <name type="primary">Zfp28</name>
    <name type="synonym">Mkr5</name>
    <name type="synonym">Zfp-28</name>
</gene>
<name>ZFP28_MOUSE</name>
<reference key="1">
    <citation type="journal article" date="2005" name="Science">
        <title>The transcriptional landscape of the mammalian genome.</title>
        <authorList>
            <person name="Carninci P."/>
            <person name="Kasukawa T."/>
            <person name="Katayama S."/>
            <person name="Gough J."/>
            <person name="Frith M.C."/>
            <person name="Maeda N."/>
            <person name="Oyama R."/>
            <person name="Ravasi T."/>
            <person name="Lenhard B."/>
            <person name="Wells C."/>
            <person name="Kodzius R."/>
            <person name="Shimokawa K."/>
            <person name="Bajic V.B."/>
            <person name="Brenner S.E."/>
            <person name="Batalov S."/>
            <person name="Forrest A.R."/>
            <person name="Zavolan M."/>
            <person name="Davis M.J."/>
            <person name="Wilming L.G."/>
            <person name="Aidinis V."/>
            <person name="Allen J.E."/>
            <person name="Ambesi-Impiombato A."/>
            <person name="Apweiler R."/>
            <person name="Aturaliya R.N."/>
            <person name="Bailey T.L."/>
            <person name="Bansal M."/>
            <person name="Baxter L."/>
            <person name="Beisel K.W."/>
            <person name="Bersano T."/>
            <person name="Bono H."/>
            <person name="Chalk A.M."/>
            <person name="Chiu K.P."/>
            <person name="Choudhary V."/>
            <person name="Christoffels A."/>
            <person name="Clutterbuck D.R."/>
            <person name="Crowe M.L."/>
            <person name="Dalla E."/>
            <person name="Dalrymple B.P."/>
            <person name="de Bono B."/>
            <person name="Della Gatta G."/>
            <person name="di Bernardo D."/>
            <person name="Down T."/>
            <person name="Engstrom P."/>
            <person name="Fagiolini M."/>
            <person name="Faulkner G."/>
            <person name="Fletcher C.F."/>
            <person name="Fukushima T."/>
            <person name="Furuno M."/>
            <person name="Futaki S."/>
            <person name="Gariboldi M."/>
            <person name="Georgii-Hemming P."/>
            <person name="Gingeras T.R."/>
            <person name="Gojobori T."/>
            <person name="Green R.E."/>
            <person name="Gustincich S."/>
            <person name="Harbers M."/>
            <person name="Hayashi Y."/>
            <person name="Hensch T.K."/>
            <person name="Hirokawa N."/>
            <person name="Hill D."/>
            <person name="Huminiecki L."/>
            <person name="Iacono M."/>
            <person name="Ikeo K."/>
            <person name="Iwama A."/>
            <person name="Ishikawa T."/>
            <person name="Jakt M."/>
            <person name="Kanapin A."/>
            <person name="Katoh M."/>
            <person name="Kawasawa Y."/>
            <person name="Kelso J."/>
            <person name="Kitamura H."/>
            <person name="Kitano H."/>
            <person name="Kollias G."/>
            <person name="Krishnan S.P."/>
            <person name="Kruger A."/>
            <person name="Kummerfeld S.K."/>
            <person name="Kurochkin I.V."/>
            <person name="Lareau L.F."/>
            <person name="Lazarevic D."/>
            <person name="Lipovich L."/>
            <person name="Liu J."/>
            <person name="Liuni S."/>
            <person name="McWilliam S."/>
            <person name="Madan Babu M."/>
            <person name="Madera M."/>
            <person name="Marchionni L."/>
            <person name="Matsuda H."/>
            <person name="Matsuzawa S."/>
            <person name="Miki H."/>
            <person name="Mignone F."/>
            <person name="Miyake S."/>
            <person name="Morris K."/>
            <person name="Mottagui-Tabar S."/>
            <person name="Mulder N."/>
            <person name="Nakano N."/>
            <person name="Nakauchi H."/>
            <person name="Ng P."/>
            <person name="Nilsson R."/>
            <person name="Nishiguchi S."/>
            <person name="Nishikawa S."/>
            <person name="Nori F."/>
            <person name="Ohara O."/>
            <person name="Okazaki Y."/>
            <person name="Orlando V."/>
            <person name="Pang K.C."/>
            <person name="Pavan W.J."/>
            <person name="Pavesi G."/>
            <person name="Pesole G."/>
            <person name="Petrovsky N."/>
            <person name="Piazza S."/>
            <person name="Reed J."/>
            <person name="Reid J.F."/>
            <person name="Ring B.Z."/>
            <person name="Ringwald M."/>
            <person name="Rost B."/>
            <person name="Ruan Y."/>
            <person name="Salzberg S.L."/>
            <person name="Sandelin A."/>
            <person name="Schneider C."/>
            <person name="Schoenbach C."/>
            <person name="Sekiguchi K."/>
            <person name="Semple C.A."/>
            <person name="Seno S."/>
            <person name="Sessa L."/>
            <person name="Sheng Y."/>
            <person name="Shibata Y."/>
            <person name="Shimada H."/>
            <person name="Shimada K."/>
            <person name="Silva D."/>
            <person name="Sinclair B."/>
            <person name="Sperling S."/>
            <person name="Stupka E."/>
            <person name="Sugiura K."/>
            <person name="Sultana R."/>
            <person name="Takenaka Y."/>
            <person name="Taki K."/>
            <person name="Tammoja K."/>
            <person name="Tan S.L."/>
            <person name="Tang S."/>
            <person name="Taylor M.S."/>
            <person name="Tegner J."/>
            <person name="Teichmann S.A."/>
            <person name="Ueda H.R."/>
            <person name="van Nimwegen E."/>
            <person name="Verardo R."/>
            <person name="Wei C.L."/>
            <person name="Yagi K."/>
            <person name="Yamanishi H."/>
            <person name="Zabarovsky E."/>
            <person name="Zhu S."/>
            <person name="Zimmer A."/>
            <person name="Hide W."/>
            <person name="Bult C."/>
            <person name="Grimmond S.M."/>
            <person name="Teasdale R.D."/>
            <person name="Liu E.T."/>
            <person name="Brusic V."/>
            <person name="Quackenbush J."/>
            <person name="Wahlestedt C."/>
            <person name="Mattick J.S."/>
            <person name="Hume D.A."/>
            <person name="Kai C."/>
            <person name="Sasaki D."/>
            <person name="Tomaru Y."/>
            <person name="Fukuda S."/>
            <person name="Kanamori-Katayama M."/>
            <person name="Suzuki M."/>
            <person name="Aoki J."/>
            <person name="Arakawa T."/>
            <person name="Iida J."/>
            <person name="Imamura K."/>
            <person name="Itoh M."/>
            <person name="Kato T."/>
            <person name="Kawaji H."/>
            <person name="Kawagashira N."/>
            <person name="Kawashima T."/>
            <person name="Kojima M."/>
            <person name="Kondo S."/>
            <person name="Konno H."/>
            <person name="Nakano K."/>
            <person name="Ninomiya N."/>
            <person name="Nishio T."/>
            <person name="Okada M."/>
            <person name="Plessy C."/>
            <person name="Shibata K."/>
            <person name="Shiraki T."/>
            <person name="Suzuki S."/>
            <person name="Tagami M."/>
            <person name="Waki K."/>
            <person name="Watahiki A."/>
            <person name="Okamura-Oho Y."/>
            <person name="Suzuki H."/>
            <person name="Kawai J."/>
            <person name="Hayashizaki Y."/>
        </authorList>
    </citation>
    <scope>NUCLEOTIDE SEQUENCE [LARGE SCALE MRNA] (ISOFORM 1)</scope>
    <source>
        <strain>C57BL/6J</strain>
        <tissue>Head</tissue>
    </source>
</reference>
<reference key="2">
    <citation type="journal article" date="2004" name="Genome Res.">
        <title>The status, quality, and expansion of the NIH full-length cDNA project: the Mammalian Gene Collection (MGC).</title>
        <authorList>
            <consortium name="The MGC Project Team"/>
        </authorList>
    </citation>
    <scope>NUCLEOTIDE SEQUENCE [LARGE SCALE MRNA] (ISOFORM 1)</scope>
    <source>
        <strain>C57BL/6J</strain>
        <tissue>Brain</tissue>
    </source>
</reference>
<reference key="3">
    <citation type="journal article" date="1988" name="Nucleic Acids Res.">
        <title>Specific and ubiquitous expression of different Zn finger protein genes in the mouse.</title>
        <authorList>
            <person name="Chowdhury K."/>
            <person name="Rohdewohld H."/>
            <person name="Gruss P."/>
        </authorList>
    </citation>
    <scope>NUCLEOTIDE SEQUENCE [MRNA] OF 268-825 (ISOFORM 1)</scope>
    <source>
        <strain>C57BL/6J</strain>
        <tissue>Embryo</tissue>
    </source>
</reference>
<reference key="4">
    <citation type="journal article" date="1994" name="Gene">
        <title>Sequence contiguity and allelic structure for the murine zinc finger-encoding gene mKr5.</title>
        <authorList>
            <person name="Udy G.B."/>
        </authorList>
    </citation>
    <scope>NUCLEOTIDE SEQUENCE [GENOMIC DNA] OF 548-741 (ISOFORM 2)</scope>
    <scope>VARIANT ILE-658</scope>
    <source>
        <strain>129/Sv</strain>
    </source>
</reference>
<keyword id="KW-0025">Alternative splicing</keyword>
<keyword id="KW-0238">DNA-binding</keyword>
<keyword id="KW-0479">Metal-binding</keyword>
<keyword id="KW-0539">Nucleus</keyword>
<keyword id="KW-1185">Reference proteome</keyword>
<keyword id="KW-0677">Repeat</keyword>
<keyword id="KW-0804">Transcription</keyword>
<keyword id="KW-0805">Transcription regulation</keyword>
<keyword id="KW-0862">Zinc</keyword>
<keyword id="KW-0863">Zinc-finger</keyword>
<dbReference type="EMBL" id="AK028202">
    <property type="protein sequence ID" value="BAC25810.1"/>
    <property type="molecule type" value="mRNA"/>
</dbReference>
<dbReference type="EMBL" id="AK048530">
    <property type="protein sequence ID" value="BAC33362.1"/>
    <property type="molecule type" value="mRNA"/>
</dbReference>
<dbReference type="EMBL" id="BC062116">
    <property type="protein sequence ID" value="AAH62116.1"/>
    <property type="molecule type" value="mRNA"/>
</dbReference>
<dbReference type="EMBL" id="X12594">
    <property type="protein sequence ID" value="CAA31107.1"/>
    <property type="molecule type" value="mRNA"/>
</dbReference>
<dbReference type="EMBL" id="M36516">
    <property type="protein sequence ID" value="AAA37120.1"/>
    <property type="molecule type" value="mRNA"/>
</dbReference>
<dbReference type="EMBL" id="L28802">
    <property type="protein sequence ID" value="AAA64428.1"/>
    <property type="molecule type" value="Genomic_DNA"/>
</dbReference>
<dbReference type="CCDS" id="CCDS39752.1">
    <molecule id="P10078-1"/>
</dbReference>
<dbReference type="PIR" id="I53859">
    <property type="entry name" value="I53859"/>
</dbReference>
<dbReference type="RefSeq" id="NP_780456.2">
    <molecule id="P10078-1"/>
    <property type="nucleotide sequence ID" value="NM_175247.3"/>
</dbReference>
<dbReference type="SMR" id="P10078"/>
<dbReference type="BioGRID" id="204654">
    <property type="interactions" value="35"/>
</dbReference>
<dbReference type="FunCoup" id="P10078">
    <property type="interactions" value="254"/>
</dbReference>
<dbReference type="IntAct" id="P10078">
    <property type="interactions" value="1"/>
</dbReference>
<dbReference type="STRING" id="10090.ENSMUSP00000079812"/>
<dbReference type="iPTMnet" id="P10078"/>
<dbReference type="PhosphoSitePlus" id="P10078"/>
<dbReference type="jPOST" id="P10078"/>
<dbReference type="PaxDb" id="10090-ENSMUSP00000079812"/>
<dbReference type="ProteomicsDB" id="275353">
    <molecule id="P10078-1"/>
</dbReference>
<dbReference type="ProteomicsDB" id="275354">
    <molecule id="P10078-2"/>
</dbReference>
<dbReference type="Pumba" id="P10078"/>
<dbReference type="Antibodypedia" id="33216">
    <property type="antibodies" value="56 antibodies from 16 providers"/>
</dbReference>
<dbReference type="DNASU" id="22690"/>
<dbReference type="Ensembl" id="ENSMUST00000081022.9">
    <molecule id="P10078-1"/>
    <property type="protein sequence ID" value="ENSMUSP00000079812.8"/>
    <property type="gene ID" value="ENSMUSG00000062861.9"/>
</dbReference>
<dbReference type="GeneID" id="22690"/>
<dbReference type="KEGG" id="mmu:22690"/>
<dbReference type="UCSC" id="uc009fbi.1">
    <molecule id="P10078-1"/>
    <property type="organism name" value="mouse"/>
</dbReference>
<dbReference type="AGR" id="MGI:99175"/>
<dbReference type="CTD" id="140612"/>
<dbReference type="MGI" id="MGI:99175">
    <property type="gene designation" value="Zfp28"/>
</dbReference>
<dbReference type="VEuPathDB" id="HostDB:ENSMUSG00000062861"/>
<dbReference type="eggNOG" id="KOG1721">
    <property type="taxonomic scope" value="Eukaryota"/>
</dbReference>
<dbReference type="GeneTree" id="ENSGT00940000162376"/>
<dbReference type="HOGENOM" id="CLU_002678_44_5_1"/>
<dbReference type="InParanoid" id="P10078"/>
<dbReference type="OMA" id="FNKSGRW"/>
<dbReference type="OrthoDB" id="9411774at2759"/>
<dbReference type="PhylomeDB" id="P10078"/>
<dbReference type="TreeFam" id="TF341817"/>
<dbReference type="Reactome" id="R-MMU-212436">
    <property type="pathway name" value="Generic Transcription Pathway"/>
</dbReference>
<dbReference type="BioGRID-ORCS" id="22690">
    <property type="hits" value="2 hits in 76 CRISPR screens"/>
</dbReference>
<dbReference type="ChiTaRS" id="Zfp28">
    <property type="organism name" value="mouse"/>
</dbReference>
<dbReference type="PRO" id="PR:P10078"/>
<dbReference type="Proteomes" id="UP000000589">
    <property type="component" value="Chromosome 7"/>
</dbReference>
<dbReference type="RNAct" id="P10078">
    <property type="molecule type" value="protein"/>
</dbReference>
<dbReference type="Bgee" id="ENSMUSG00000062861">
    <property type="expression patterns" value="Expressed in lumbar subsegment of spinal cord and 193 other cell types or tissues"/>
</dbReference>
<dbReference type="ExpressionAtlas" id="P10078">
    <property type="expression patterns" value="baseline and differential"/>
</dbReference>
<dbReference type="GO" id="GO:0005634">
    <property type="term" value="C:nucleus"/>
    <property type="evidence" value="ECO:0007669"/>
    <property type="project" value="UniProtKB-SubCell"/>
</dbReference>
<dbReference type="GO" id="GO:0003677">
    <property type="term" value="F:DNA binding"/>
    <property type="evidence" value="ECO:0007669"/>
    <property type="project" value="UniProtKB-KW"/>
</dbReference>
<dbReference type="GO" id="GO:0008270">
    <property type="term" value="F:zinc ion binding"/>
    <property type="evidence" value="ECO:0007669"/>
    <property type="project" value="UniProtKB-KW"/>
</dbReference>
<dbReference type="GO" id="GO:0006355">
    <property type="term" value="P:regulation of DNA-templated transcription"/>
    <property type="evidence" value="ECO:0007669"/>
    <property type="project" value="InterPro"/>
</dbReference>
<dbReference type="CDD" id="cd07765">
    <property type="entry name" value="KRAB_A-box"/>
    <property type="match status" value="1"/>
</dbReference>
<dbReference type="FunFam" id="3.30.160.60:FF:000062">
    <property type="entry name" value="RB-associated KRAB zinc finger protein-like"/>
    <property type="match status" value="1"/>
</dbReference>
<dbReference type="FunFam" id="3.30.160.60:FF:001220">
    <property type="entry name" value="ZFP28 zinc finger protein"/>
    <property type="match status" value="1"/>
</dbReference>
<dbReference type="FunFam" id="3.30.160.60:FF:001502">
    <property type="entry name" value="ZFP28 zinc finger protein"/>
    <property type="match status" value="1"/>
</dbReference>
<dbReference type="FunFam" id="3.30.160.60:FF:001506">
    <property type="entry name" value="Zinc finger protein"/>
    <property type="match status" value="1"/>
</dbReference>
<dbReference type="FunFam" id="3.30.160.60:FF:000944">
    <property type="entry name" value="zinc finger protein 232 isoform X1"/>
    <property type="match status" value="1"/>
</dbReference>
<dbReference type="FunFam" id="3.30.160.60:FF:003355">
    <property type="entry name" value="Zinc finger protein 28 homolog"/>
    <property type="match status" value="1"/>
</dbReference>
<dbReference type="FunFam" id="3.30.160.60:FF:002343">
    <property type="entry name" value="Zinc finger protein 33A"/>
    <property type="match status" value="1"/>
</dbReference>
<dbReference type="FunFam" id="3.30.160.60:FF:000016">
    <property type="entry name" value="zinc finger protein 37 homolog"/>
    <property type="match status" value="2"/>
</dbReference>
<dbReference type="FunFam" id="3.30.160.60:FF:001498">
    <property type="entry name" value="Zinc finger protein 404"/>
    <property type="match status" value="1"/>
</dbReference>
<dbReference type="FunFam" id="3.30.160.60:FF:000519">
    <property type="entry name" value="Zinc finger protein 470"/>
    <property type="match status" value="1"/>
</dbReference>
<dbReference type="FunFam" id="3.30.160.60:FF:002090">
    <property type="entry name" value="Zinc finger protein 473"/>
    <property type="match status" value="1"/>
</dbReference>
<dbReference type="FunFam" id="3.30.160.60:FF:000281">
    <property type="entry name" value="Zinc finger protein 558 isoform X1"/>
    <property type="match status" value="1"/>
</dbReference>
<dbReference type="FunFam" id="3.30.160.60:FF:000070">
    <property type="entry name" value="zinc finger protein 689 isoform X1"/>
    <property type="match status" value="1"/>
</dbReference>
<dbReference type="Gene3D" id="6.10.140.140">
    <property type="match status" value="1"/>
</dbReference>
<dbReference type="Gene3D" id="3.30.160.60">
    <property type="entry name" value="Classic Zinc Finger"/>
    <property type="match status" value="15"/>
</dbReference>
<dbReference type="InterPro" id="IPR001909">
    <property type="entry name" value="KRAB"/>
</dbReference>
<dbReference type="InterPro" id="IPR036051">
    <property type="entry name" value="KRAB_dom_sf"/>
</dbReference>
<dbReference type="InterPro" id="IPR036236">
    <property type="entry name" value="Znf_C2H2_sf"/>
</dbReference>
<dbReference type="InterPro" id="IPR013087">
    <property type="entry name" value="Znf_C2H2_type"/>
</dbReference>
<dbReference type="PANTHER" id="PTHR24376">
    <property type="entry name" value="ZINC FINGER PROTEIN"/>
    <property type="match status" value="1"/>
</dbReference>
<dbReference type="PANTHER" id="PTHR24376:SF211">
    <property type="entry name" value="ZINC FINGER PROTEIN 606"/>
    <property type="match status" value="1"/>
</dbReference>
<dbReference type="Pfam" id="PF01352">
    <property type="entry name" value="KRAB"/>
    <property type="match status" value="1"/>
</dbReference>
<dbReference type="Pfam" id="PF00096">
    <property type="entry name" value="zf-C2H2"/>
    <property type="match status" value="12"/>
</dbReference>
<dbReference type="Pfam" id="PF13912">
    <property type="entry name" value="zf-C2H2_6"/>
    <property type="match status" value="1"/>
</dbReference>
<dbReference type="SMART" id="SM00349">
    <property type="entry name" value="KRAB"/>
    <property type="match status" value="1"/>
</dbReference>
<dbReference type="SMART" id="SM00355">
    <property type="entry name" value="ZnF_C2H2"/>
    <property type="match status" value="14"/>
</dbReference>
<dbReference type="SUPFAM" id="SSF57667">
    <property type="entry name" value="beta-beta-alpha zinc fingers"/>
    <property type="match status" value="8"/>
</dbReference>
<dbReference type="SUPFAM" id="SSF109640">
    <property type="entry name" value="KRAB domain (Kruppel-associated box)"/>
    <property type="match status" value="1"/>
</dbReference>
<dbReference type="PROSITE" id="PS50805">
    <property type="entry name" value="KRAB"/>
    <property type="match status" value="1"/>
</dbReference>
<dbReference type="PROSITE" id="PS00028">
    <property type="entry name" value="ZINC_FINGER_C2H2_1"/>
    <property type="match status" value="14"/>
</dbReference>
<dbReference type="PROSITE" id="PS50157">
    <property type="entry name" value="ZINC_FINGER_C2H2_2"/>
    <property type="match status" value="14"/>
</dbReference>
<feature type="chain" id="PRO_0000047290" description="Zinc finger protein 28">
    <location>
        <begin position="1"/>
        <end position="825"/>
    </location>
</feature>
<feature type="domain" description="KRAB" evidence="2">
    <location>
        <begin position="103"/>
        <end position="174"/>
    </location>
</feature>
<feature type="zinc finger region" description="C2H2-type 1" evidence="1">
    <location>
        <begin position="377"/>
        <end position="399"/>
    </location>
</feature>
<feature type="zinc finger region" description="C2H2-type 2" evidence="1">
    <location>
        <begin position="405"/>
        <end position="427"/>
    </location>
</feature>
<feature type="zinc finger region" description="C2H2-type 3" evidence="1">
    <location>
        <begin position="433"/>
        <end position="456"/>
    </location>
</feature>
<feature type="zinc finger region" description="C2H2-type 4" evidence="1">
    <location>
        <begin position="462"/>
        <end position="484"/>
    </location>
</feature>
<feature type="zinc finger region" description="C2H2-type 5" evidence="1">
    <location>
        <begin position="490"/>
        <end position="512"/>
    </location>
</feature>
<feature type="zinc finger region" description="C2H2-type 6" evidence="1">
    <location>
        <begin position="518"/>
        <end position="540"/>
    </location>
</feature>
<feature type="zinc finger region" description="C2H2-type 7" evidence="1">
    <location>
        <begin position="546"/>
        <end position="568"/>
    </location>
</feature>
<feature type="zinc finger region" description="C2H2-type 8" evidence="1">
    <location>
        <begin position="574"/>
        <end position="596"/>
    </location>
</feature>
<feature type="zinc finger region" description="C2H2-type 9" evidence="1">
    <location>
        <begin position="602"/>
        <end position="624"/>
    </location>
</feature>
<feature type="zinc finger region" description="C2H2-type 10" evidence="1">
    <location>
        <begin position="630"/>
        <end position="652"/>
    </location>
</feature>
<feature type="zinc finger region" description="C2H2-type 11" evidence="1">
    <location>
        <begin position="658"/>
        <end position="680"/>
    </location>
</feature>
<feature type="zinc finger region" description="C2H2-type 12" evidence="1">
    <location>
        <begin position="686"/>
        <end position="708"/>
    </location>
</feature>
<feature type="zinc finger region" description="C2H2-type 13" evidence="1">
    <location>
        <begin position="714"/>
        <end position="736"/>
    </location>
</feature>
<feature type="zinc finger region" description="C2H2-type 14" evidence="1">
    <location>
        <begin position="742"/>
        <end position="764"/>
    </location>
</feature>
<feature type="zinc finger region" description="C2H2-type 15; degenerate" evidence="1">
    <location>
        <begin position="770"/>
        <end position="792"/>
    </location>
</feature>
<feature type="region of interest" description="Disordered" evidence="3">
    <location>
        <begin position="26"/>
        <end position="65"/>
    </location>
</feature>
<feature type="compositionally biased region" description="Low complexity" evidence="3">
    <location>
        <begin position="33"/>
        <end position="42"/>
    </location>
</feature>
<feature type="compositionally biased region" description="Polar residues" evidence="3">
    <location>
        <begin position="51"/>
        <end position="65"/>
    </location>
</feature>
<feature type="splice variant" id="VSP_006882" description="In isoform 2." evidence="4">
    <original>K</original>
    <variation>KPFECKVCRKAFRQNIHLASHWRIHTGEKPFECGECGKSFSISSQLATHQRIHTGEK</variation>
    <location>
        <position position="600"/>
    </location>
</feature>
<feature type="sequence variant" description="In strain: 129/Sv; requires 2 nucleotide substitutions.">
    <original>Y</original>
    <variation>I</variation>
    <location>
        <position position="658"/>
    </location>
</feature>
<feature type="sequence conflict" description="In Ref. 1; BAC33362." evidence="4" ref="1">
    <original>R</original>
    <variation>W</variation>
    <location>
        <position position="263"/>
    </location>
</feature>
<feature type="sequence conflict" description="In Ref. 3; CAA31107/AAA37120." evidence="4" ref="3">
    <original>C</original>
    <variation>Y</variation>
    <location>
        <position position="426"/>
    </location>
</feature>
<feature type="sequence conflict" description="In Ref. 3 and 4." evidence="4" ref="3 4">
    <original>R</original>
    <variation>Q</variation>
    <location>
        <position position="677"/>
    </location>
</feature>
<feature type="sequence conflict" description="In Ref. 3 and 4." evidence="4" ref="3 4">
    <original>Q</original>
    <variation>L</variation>
    <location>
        <position position="683"/>
    </location>
</feature>
<feature type="sequence conflict" description="In Ref. 3 and 4." evidence="4" ref="3 4">
    <original>HR</original>
    <variation>YC</variation>
    <location>
        <begin position="704"/>
        <end position="705"/>
    </location>
</feature>
<feature type="sequence conflict" description="In Ref. 3 and 4." evidence="4" ref="3 4">
    <original>R</original>
    <variation>W</variation>
    <location>
        <position position="726"/>
    </location>
</feature>
<organism>
    <name type="scientific">Mus musculus</name>
    <name type="common">Mouse</name>
    <dbReference type="NCBI Taxonomy" id="10090"/>
    <lineage>
        <taxon>Eukaryota</taxon>
        <taxon>Metazoa</taxon>
        <taxon>Chordata</taxon>
        <taxon>Craniata</taxon>
        <taxon>Vertebrata</taxon>
        <taxon>Euteleostomi</taxon>
        <taxon>Mammalia</taxon>
        <taxon>Eutheria</taxon>
        <taxon>Euarchontoglires</taxon>
        <taxon>Glires</taxon>
        <taxon>Rodentia</taxon>
        <taxon>Myomorpha</taxon>
        <taxon>Muroidea</taxon>
        <taxon>Muridae</taxon>
        <taxon>Murinae</taxon>
        <taxon>Mus</taxon>
        <taxon>Mus</taxon>
    </lineage>
</organism>
<protein>
    <recommendedName>
        <fullName>Zinc finger protein 28</fullName>
        <shortName>Zfp-28</shortName>
    </recommendedName>
    <alternativeName>
        <fullName>Protein mKR5</fullName>
    </alternativeName>
</protein>
<proteinExistence type="evidence at transcript level"/>
<evidence type="ECO:0000255" key="1">
    <source>
        <dbReference type="PROSITE-ProRule" id="PRU00042"/>
    </source>
</evidence>
<evidence type="ECO:0000255" key="2">
    <source>
        <dbReference type="PROSITE-ProRule" id="PRU00119"/>
    </source>
</evidence>
<evidence type="ECO:0000256" key="3">
    <source>
        <dbReference type="SAM" id="MobiDB-lite"/>
    </source>
</evidence>
<evidence type="ECO:0000305" key="4"/>
<sequence length="825" mass="93309">MQGMASVVSCEPWALLGRGALCTKARPGGGPAAGTVVAPGSPDRGRPRSRNSLASQDQQGAVTSGTAHKALFSRDTNFLQEINRKQEAAPTGTRHKAKSQGLVTFGDVAVVFSQEEWEWLNSEQRSLYWKVMLDNYRNLASLGLCASQPDMITSLEQGRDPWMMKRKMRKGQHLDLKAMQETKEFPPKDLSEETLFLAVLRKQLLPHRPKCSMVRAAWEGGAVFTTHRGLKTNSGLARDSPAQLVSAQRSFCKSVTWENCGDRGSVGQQSVQEAQDLLPRQDSHAERVTGRTWSTKLECSTFRDQDSECTFERNEQETVTPNRAFSEGRDGMCIESGRWFHLNSSDERSHNCDSGKSFSSNPVVVKETGICSGKKLFQCNECKKTFTQSSSLTVHQRIHTGEKPYKCNQCGKAFSDGSSFARHQRCHTGKKPYECPECGKAFIQNTSLVRHWRYYHTGEKPFDCIDCGKAFSDHIGLNQHRRIHTGEKPYTCEVCHKSFRYGSSLTVHQRIHTGEKPYECEICRKAFSHHASLTQHQRVHSGEKPFKCKECGKAFRQNIHLASHWRIHTGEKPFECGECGKSFSISSQLATHQRIHTGEKPYECKVCRKAFTQKAHLAQHQKTHTGEKPYECKECGKAFSQTTHLIQHQRVHTGEKPYKCLECGKAFGDNSSCTQHRRLHTGQRPYECVECGKTFKTKSSLICHRRCHTGEKPYECSACGKAFSHRQSLSVHQRIHSGKKPYECKECRKTFIQIGHLNQHKRVHTGERTYNYKKGRRAFRQTAHFAHHQQIHSGKSPAHHSLPSTSNPVDLFSKFVWNPSSLPSS</sequence>
<accession>P10078</accession>
<accession>Q61776</accession>
<accession>Q8BT11</accession>
<accession>Q8C836</accession>
<comment type="function">
    <text>May be involved in transcriptional regulation. May have a role in embryonic development.</text>
</comment>
<comment type="subcellular location">
    <subcellularLocation>
        <location evidence="4">Nucleus</location>
    </subcellularLocation>
</comment>
<comment type="alternative products">
    <event type="alternative splicing"/>
    <isoform>
        <id>P10078-1</id>
        <name>1</name>
        <sequence type="displayed"/>
    </isoform>
    <isoform>
        <id>P10078-2</id>
        <name>2</name>
        <sequence type="described" ref="VSP_006882"/>
    </isoform>
</comment>
<comment type="tissue specificity">
    <text>Expressed predominantly in ovary.</text>
</comment>
<comment type="developmental stage">
    <text>Expression decreases in embryo after day 16.</text>
</comment>
<comment type="similarity">
    <text evidence="4">Belongs to the krueppel C2H2-type zinc-finger protein family.</text>
</comment>